<comment type="PTM">
    <text evidence="1">The N-terminus is cleaved by ribosomal processing cysteine protease Prp.</text>
</comment>
<comment type="similarity">
    <text evidence="2">Belongs to the bacterial ribosomal protein bL27 family.</text>
</comment>
<keyword id="KW-0687">Ribonucleoprotein</keyword>
<keyword id="KW-0689">Ribosomal protein</keyword>
<feature type="propeptide" id="PRO_0000459975" evidence="1">
    <location>
        <begin position="1"/>
        <end position="6"/>
    </location>
</feature>
<feature type="chain" id="PRO_1000128820" description="Large ribosomal subunit protein bL27">
    <location>
        <begin position="7"/>
        <end position="95"/>
    </location>
</feature>
<feature type="region of interest" description="Disordered" evidence="3">
    <location>
        <begin position="1"/>
        <end position="25"/>
    </location>
</feature>
<dbReference type="EMBL" id="CP000923">
    <property type="protein sequence ID" value="ABY93387.1"/>
    <property type="molecule type" value="Genomic_DNA"/>
</dbReference>
<dbReference type="RefSeq" id="WP_003868116.1">
    <property type="nucleotide sequence ID" value="NC_010320.1"/>
</dbReference>
<dbReference type="SMR" id="B0K416"/>
<dbReference type="KEGG" id="tex:Teth514_2115"/>
<dbReference type="HOGENOM" id="CLU_095424_4_0_9"/>
<dbReference type="Proteomes" id="UP000002155">
    <property type="component" value="Chromosome"/>
</dbReference>
<dbReference type="GO" id="GO:0022625">
    <property type="term" value="C:cytosolic large ribosomal subunit"/>
    <property type="evidence" value="ECO:0007669"/>
    <property type="project" value="TreeGrafter"/>
</dbReference>
<dbReference type="GO" id="GO:0003735">
    <property type="term" value="F:structural constituent of ribosome"/>
    <property type="evidence" value="ECO:0007669"/>
    <property type="project" value="InterPro"/>
</dbReference>
<dbReference type="GO" id="GO:0006412">
    <property type="term" value="P:translation"/>
    <property type="evidence" value="ECO:0007669"/>
    <property type="project" value="UniProtKB-UniRule"/>
</dbReference>
<dbReference type="FunFam" id="2.40.50.100:FF:000004">
    <property type="entry name" value="50S ribosomal protein L27"/>
    <property type="match status" value="1"/>
</dbReference>
<dbReference type="Gene3D" id="2.40.50.100">
    <property type="match status" value="1"/>
</dbReference>
<dbReference type="HAMAP" id="MF_00539">
    <property type="entry name" value="Ribosomal_bL27"/>
    <property type="match status" value="1"/>
</dbReference>
<dbReference type="InterPro" id="IPR001684">
    <property type="entry name" value="Ribosomal_bL27"/>
</dbReference>
<dbReference type="InterPro" id="IPR018261">
    <property type="entry name" value="Ribosomal_bL27_CS"/>
</dbReference>
<dbReference type="NCBIfam" id="TIGR00062">
    <property type="entry name" value="L27"/>
    <property type="match status" value="1"/>
</dbReference>
<dbReference type="PANTHER" id="PTHR15893:SF0">
    <property type="entry name" value="LARGE RIBOSOMAL SUBUNIT PROTEIN BL27M"/>
    <property type="match status" value="1"/>
</dbReference>
<dbReference type="PANTHER" id="PTHR15893">
    <property type="entry name" value="RIBOSOMAL PROTEIN L27"/>
    <property type="match status" value="1"/>
</dbReference>
<dbReference type="Pfam" id="PF01016">
    <property type="entry name" value="Ribosomal_L27"/>
    <property type="match status" value="1"/>
</dbReference>
<dbReference type="PRINTS" id="PR00063">
    <property type="entry name" value="RIBOSOMALL27"/>
</dbReference>
<dbReference type="SUPFAM" id="SSF110324">
    <property type="entry name" value="Ribosomal L27 protein-like"/>
    <property type="match status" value="1"/>
</dbReference>
<dbReference type="PROSITE" id="PS00831">
    <property type="entry name" value="RIBOSOMAL_L27"/>
    <property type="match status" value="1"/>
</dbReference>
<organism>
    <name type="scientific">Thermoanaerobacter sp. (strain X514)</name>
    <dbReference type="NCBI Taxonomy" id="399726"/>
    <lineage>
        <taxon>Bacteria</taxon>
        <taxon>Bacillati</taxon>
        <taxon>Bacillota</taxon>
        <taxon>Clostridia</taxon>
        <taxon>Thermoanaerobacterales</taxon>
        <taxon>Thermoanaerobacteraceae</taxon>
        <taxon>Thermoanaerobacter</taxon>
    </lineage>
</organism>
<name>RL27_THEPX</name>
<gene>
    <name evidence="2" type="primary">rpmA</name>
    <name type="ordered locus">Teth514_2115</name>
</gene>
<evidence type="ECO:0000250" key="1">
    <source>
        <dbReference type="UniProtKB" id="Q2FXT0"/>
    </source>
</evidence>
<evidence type="ECO:0000255" key="2">
    <source>
        <dbReference type="HAMAP-Rule" id="MF_00539"/>
    </source>
</evidence>
<evidence type="ECO:0000256" key="3">
    <source>
        <dbReference type="SAM" id="MobiDB-lite"/>
    </source>
</evidence>
<evidence type="ECO:0000305" key="4"/>
<accession>B0K416</accession>
<proteinExistence type="inferred from homology"/>
<reference key="1">
    <citation type="submission" date="2008-01" db="EMBL/GenBank/DDBJ databases">
        <title>Complete sequence of Thermoanaerobacter sp. X514.</title>
        <authorList>
            <consortium name="US DOE Joint Genome Institute"/>
            <person name="Copeland A."/>
            <person name="Lucas S."/>
            <person name="Lapidus A."/>
            <person name="Barry K."/>
            <person name="Glavina del Rio T."/>
            <person name="Dalin E."/>
            <person name="Tice H."/>
            <person name="Pitluck S."/>
            <person name="Bruce D."/>
            <person name="Goodwin L."/>
            <person name="Saunders E."/>
            <person name="Brettin T."/>
            <person name="Detter J.C."/>
            <person name="Han C."/>
            <person name="Schmutz J."/>
            <person name="Larimer F."/>
            <person name="Land M."/>
            <person name="Hauser L."/>
            <person name="Kyrpides N."/>
            <person name="Kim E."/>
            <person name="Hemme C."/>
            <person name="Fields M.W."/>
            <person name="He Z."/>
            <person name="Zhou J."/>
            <person name="Richardson P."/>
        </authorList>
    </citation>
    <scope>NUCLEOTIDE SEQUENCE [LARGE SCALE GENOMIC DNA]</scope>
    <source>
        <strain>X514</strain>
    </source>
</reference>
<protein>
    <recommendedName>
        <fullName evidence="2">Large ribosomal subunit protein bL27</fullName>
    </recommendedName>
    <alternativeName>
        <fullName evidence="4">50S ribosomal protein L27</fullName>
    </alternativeName>
</protein>
<sequence>MKLQLFAHKKGVGSSRNGRDSESKRLGVKRADGQFVLAGNILVRQRGTKIHPGVNVGKGKDDTLFALIDGYVTFERKGRDKKQVSVYPERKVAQN</sequence>